<gene>
    <name evidence="1" type="primary">lipA</name>
    <name type="ordered locus">MS1826</name>
</gene>
<proteinExistence type="inferred from homology"/>
<name>LIPA_MANSM</name>
<comment type="function">
    <text evidence="1">Catalyzes the radical-mediated insertion of two sulfur atoms into the C-6 and C-8 positions of the octanoyl moiety bound to the lipoyl domains of lipoate-dependent enzymes, thereby converting the octanoylated domains into lipoylated derivatives.</text>
</comment>
<comment type="catalytic activity">
    <reaction evidence="1">
        <text>[[Fe-S] cluster scaffold protein carrying a second [4Fe-4S](2+) cluster] + N(6)-octanoyl-L-lysyl-[protein] + 2 oxidized [2Fe-2S]-[ferredoxin] + 2 S-adenosyl-L-methionine + 4 H(+) = [[Fe-S] cluster scaffold protein] + N(6)-[(R)-dihydrolipoyl]-L-lysyl-[protein] + 4 Fe(3+) + 2 hydrogen sulfide + 2 5'-deoxyadenosine + 2 L-methionine + 2 reduced [2Fe-2S]-[ferredoxin]</text>
        <dbReference type="Rhea" id="RHEA:16585"/>
        <dbReference type="Rhea" id="RHEA-COMP:9928"/>
        <dbReference type="Rhea" id="RHEA-COMP:10000"/>
        <dbReference type="Rhea" id="RHEA-COMP:10001"/>
        <dbReference type="Rhea" id="RHEA-COMP:10475"/>
        <dbReference type="Rhea" id="RHEA-COMP:14568"/>
        <dbReference type="Rhea" id="RHEA-COMP:14569"/>
        <dbReference type="ChEBI" id="CHEBI:15378"/>
        <dbReference type="ChEBI" id="CHEBI:17319"/>
        <dbReference type="ChEBI" id="CHEBI:29034"/>
        <dbReference type="ChEBI" id="CHEBI:29919"/>
        <dbReference type="ChEBI" id="CHEBI:33722"/>
        <dbReference type="ChEBI" id="CHEBI:33737"/>
        <dbReference type="ChEBI" id="CHEBI:33738"/>
        <dbReference type="ChEBI" id="CHEBI:57844"/>
        <dbReference type="ChEBI" id="CHEBI:59789"/>
        <dbReference type="ChEBI" id="CHEBI:78809"/>
        <dbReference type="ChEBI" id="CHEBI:83100"/>
        <dbReference type="EC" id="2.8.1.8"/>
    </reaction>
</comment>
<comment type="cofactor">
    <cofactor evidence="1">
        <name>[4Fe-4S] cluster</name>
        <dbReference type="ChEBI" id="CHEBI:49883"/>
    </cofactor>
    <text evidence="1">Binds 2 [4Fe-4S] clusters per subunit. One cluster is coordinated with 3 cysteines and an exchangeable S-adenosyl-L-methionine.</text>
</comment>
<comment type="pathway">
    <text evidence="1">Protein modification; protein lipoylation via endogenous pathway; protein N(6)-(lipoyl)lysine from octanoyl-[acyl-carrier-protein]: step 2/2.</text>
</comment>
<comment type="subcellular location">
    <subcellularLocation>
        <location evidence="1">Cytoplasm</location>
    </subcellularLocation>
</comment>
<comment type="similarity">
    <text evidence="1">Belongs to the radical SAM superfamily. Lipoyl synthase family.</text>
</comment>
<organism>
    <name type="scientific">Mannheimia succiniciproducens (strain KCTC 0769BP / MBEL55E)</name>
    <dbReference type="NCBI Taxonomy" id="221988"/>
    <lineage>
        <taxon>Bacteria</taxon>
        <taxon>Pseudomonadati</taxon>
        <taxon>Pseudomonadota</taxon>
        <taxon>Gammaproteobacteria</taxon>
        <taxon>Pasteurellales</taxon>
        <taxon>Pasteurellaceae</taxon>
        <taxon>Basfia</taxon>
    </lineage>
</organism>
<reference key="1">
    <citation type="journal article" date="2004" name="Nat. Biotechnol.">
        <title>The genome sequence of the capnophilic rumen bacterium Mannheimia succiniciproducens.</title>
        <authorList>
            <person name="Hong S.H."/>
            <person name="Kim J.S."/>
            <person name="Lee S.Y."/>
            <person name="In Y.H."/>
            <person name="Choi S.S."/>
            <person name="Rih J.-K."/>
            <person name="Kim C.H."/>
            <person name="Jeong H."/>
            <person name="Hur C.G."/>
            <person name="Kim J.J."/>
        </authorList>
    </citation>
    <scope>NUCLEOTIDE SEQUENCE [LARGE SCALE GENOMIC DNA]</scope>
    <source>
        <strain>KCTC 0769BP / MBEL55E</strain>
    </source>
</reference>
<accession>Q65RH7</accession>
<protein>
    <recommendedName>
        <fullName evidence="1">Lipoyl synthase</fullName>
        <ecNumber evidence="1">2.8.1.8</ecNumber>
    </recommendedName>
    <alternativeName>
        <fullName evidence="1">Lip-syn</fullName>
        <shortName evidence="1">LS</shortName>
    </alternativeName>
    <alternativeName>
        <fullName evidence="1">Lipoate synthase</fullName>
    </alternativeName>
    <alternativeName>
        <fullName evidence="1">Lipoic acid synthase</fullName>
    </alternativeName>
    <alternativeName>
        <fullName evidence="1">Sulfur insertion protein LipA</fullName>
    </alternativeName>
</protein>
<keyword id="KW-0004">4Fe-4S</keyword>
<keyword id="KW-0963">Cytoplasm</keyword>
<keyword id="KW-0408">Iron</keyword>
<keyword id="KW-0411">Iron-sulfur</keyword>
<keyword id="KW-0479">Metal-binding</keyword>
<keyword id="KW-0949">S-adenosyl-L-methionine</keyword>
<keyword id="KW-0808">Transferase</keyword>
<evidence type="ECO:0000255" key="1">
    <source>
        <dbReference type="HAMAP-Rule" id="MF_00206"/>
    </source>
</evidence>
<evidence type="ECO:0000255" key="2">
    <source>
        <dbReference type="PROSITE-ProRule" id="PRU01266"/>
    </source>
</evidence>
<sequence length="320" mass="36221">MSTAFKMERGVKYRDAAKTSIIQVKNIDPDQELLQKPSWMKIKLPANSAKIQSIKNGMRRHGLNSVCEEASCPNLHECFNHGTATFMILGAICTRRCPFCDVAHGKPLPPDPEEPKKLAETIQDMKLKYVVITSVDRDDLPDRGAGHFAECIKEIRKINPNTQIEILVPDFRGRIEQALDKLKDNPPDVFNHNLENVPRLYRDIRPGADYQWSLKLLREFKALFPHIPTKSGLMVGLGETNEEILNVMQDLRNNGVTMLTLGQYLQPSRFHLPVARYVPPEEFDEFRTKAEVMGFEHAACGPFVRSSYHADLQASGGLVK</sequence>
<feature type="chain" id="PRO_1000012231" description="Lipoyl synthase">
    <location>
        <begin position="1"/>
        <end position="320"/>
    </location>
</feature>
<feature type="domain" description="Radical SAM core" evidence="2">
    <location>
        <begin position="79"/>
        <end position="296"/>
    </location>
</feature>
<feature type="binding site" evidence="1">
    <location>
        <position position="67"/>
    </location>
    <ligand>
        <name>[4Fe-4S] cluster</name>
        <dbReference type="ChEBI" id="CHEBI:49883"/>
        <label>1</label>
    </ligand>
</feature>
<feature type="binding site" evidence="1">
    <location>
        <position position="72"/>
    </location>
    <ligand>
        <name>[4Fe-4S] cluster</name>
        <dbReference type="ChEBI" id="CHEBI:49883"/>
        <label>1</label>
    </ligand>
</feature>
<feature type="binding site" evidence="1">
    <location>
        <position position="78"/>
    </location>
    <ligand>
        <name>[4Fe-4S] cluster</name>
        <dbReference type="ChEBI" id="CHEBI:49883"/>
        <label>1</label>
    </ligand>
</feature>
<feature type="binding site" evidence="1">
    <location>
        <position position="93"/>
    </location>
    <ligand>
        <name>[4Fe-4S] cluster</name>
        <dbReference type="ChEBI" id="CHEBI:49883"/>
        <label>2</label>
        <note>4Fe-4S-S-AdoMet</note>
    </ligand>
</feature>
<feature type="binding site" evidence="1">
    <location>
        <position position="97"/>
    </location>
    <ligand>
        <name>[4Fe-4S] cluster</name>
        <dbReference type="ChEBI" id="CHEBI:49883"/>
        <label>2</label>
        <note>4Fe-4S-S-AdoMet</note>
    </ligand>
</feature>
<feature type="binding site" evidence="1">
    <location>
        <position position="100"/>
    </location>
    <ligand>
        <name>[4Fe-4S] cluster</name>
        <dbReference type="ChEBI" id="CHEBI:49883"/>
        <label>2</label>
        <note>4Fe-4S-S-AdoMet</note>
    </ligand>
</feature>
<feature type="binding site" evidence="1">
    <location>
        <position position="307"/>
    </location>
    <ligand>
        <name>[4Fe-4S] cluster</name>
        <dbReference type="ChEBI" id="CHEBI:49883"/>
        <label>1</label>
    </ligand>
</feature>
<dbReference type="EC" id="2.8.1.8" evidence="1"/>
<dbReference type="EMBL" id="AE016827">
    <property type="protein sequence ID" value="AAU38433.1"/>
    <property type="molecule type" value="Genomic_DNA"/>
</dbReference>
<dbReference type="RefSeq" id="WP_011200989.1">
    <property type="nucleotide sequence ID" value="NC_006300.1"/>
</dbReference>
<dbReference type="SMR" id="Q65RH7"/>
<dbReference type="STRING" id="221988.MS1826"/>
<dbReference type="KEGG" id="msu:MS1826"/>
<dbReference type="eggNOG" id="COG0320">
    <property type="taxonomic scope" value="Bacteria"/>
</dbReference>
<dbReference type="HOGENOM" id="CLU_033144_2_1_6"/>
<dbReference type="OrthoDB" id="9787898at2"/>
<dbReference type="UniPathway" id="UPA00538">
    <property type="reaction ID" value="UER00593"/>
</dbReference>
<dbReference type="Proteomes" id="UP000000607">
    <property type="component" value="Chromosome"/>
</dbReference>
<dbReference type="GO" id="GO:0005737">
    <property type="term" value="C:cytoplasm"/>
    <property type="evidence" value="ECO:0007669"/>
    <property type="project" value="UniProtKB-SubCell"/>
</dbReference>
<dbReference type="GO" id="GO:0051539">
    <property type="term" value="F:4 iron, 4 sulfur cluster binding"/>
    <property type="evidence" value="ECO:0007669"/>
    <property type="project" value="UniProtKB-UniRule"/>
</dbReference>
<dbReference type="GO" id="GO:0016992">
    <property type="term" value="F:lipoate synthase activity"/>
    <property type="evidence" value="ECO:0007669"/>
    <property type="project" value="UniProtKB-UniRule"/>
</dbReference>
<dbReference type="GO" id="GO:0046872">
    <property type="term" value="F:metal ion binding"/>
    <property type="evidence" value="ECO:0007669"/>
    <property type="project" value="UniProtKB-KW"/>
</dbReference>
<dbReference type="CDD" id="cd01335">
    <property type="entry name" value="Radical_SAM"/>
    <property type="match status" value="1"/>
</dbReference>
<dbReference type="FunFam" id="3.20.20.70:FF:000023">
    <property type="entry name" value="Lipoyl synthase"/>
    <property type="match status" value="1"/>
</dbReference>
<dbReference type="Gene3D" id="3.20.20.70">
    <property type="entry name" value="Aldolase class I"/>
    <property type="match status" value="1"/>
</dbReference>
<dbReference type="HAMAP" id="MF_00206">
    <property type="entry name" value="Lipoyl_synth"/>
    <property type="match status" value="1"/>
</dbReference>
<dbReference type="InterPro" id="IPR013785">
    <property type="entry name" value="Aldolase_TIM"/>
</dbReference>
<dbReference type="InterPro" id="IPR006638">
    <property type="entry name" value="Elp3/MiaA/NifB-like_rSAM"/>
</dbReference>
<dbReference type="InterPro" id="IPR003698">
    <property type="entry name" value="Lipoyl_synth"/>
</dbReference>
<dbReference type="InterPro" id="IPR007197">
    <property type="entry name" value="rSAM"/>
</dbReference>
<dbReference type="NCBIfam" id="TIGR00510">
    <property type="entry name" value="lipA"/>
    <property type="match status" value="1"/>
</dbReference>
<dbReference type="NCBIfam" id="NF004019">
    <property type="entry name" value="PRK05481.1"/>
    <property type="match status" value="1"/>
</dbReference>
<dbReference type="NCBIfam" id="NF009544">
    <property type="entry name" value="PRK12928.1"/>
    <property type="match status" value="1"/>
</dbReference>
<dbReference type="PANTHER" id="PTHR10949">
    <property type="entry name" value="LIPOYL SYNTHASE"/>
    <property type="match status" value="1"/>
</dbReference>
<dbReference type="PANTHER" id="PTHR10949:SF0">
    <property type="entry name" value="LIPOYL SYNTHASE, MITOCHONDRIAL"/>
    <property type="match status" value="1"/>
</dbReference>
<dbReference type="Pfam" id="PF04055">
    <property type="entry name" value="Radical_SAM"/>
    <property type="match status" value="1"/>
</dbReference>
<dbReference type="PIRSF" id="PIRSF005963">
    <property type="entry name" value="Lipoyl_synth"/>
    <property type="match status" value="1"/>
</dbReference>
<dbReference type="SFLD" id="SFLDF00271">
    <property type="entry name" value="lipoyl_synthase"/>
    <property type="match status" value="1"/>
</dbReference>
<dbReference type="SFLD" id="SFLDS00029">
    <property type="entry name" value="Radical_SAM"/>
    <property type="match status" value="1"/>
</dbReference>
<dbReference type="SMART" id="SM00729">
    <property type="entry name" value="Elp3"/>
    <property type="match status" value="1"/>
</dbReference>
<dbReference type="SUPFAM" id="SSF102114">
    <property type="entry name" value="Radical SAM enzymes"/>
    <property type="match status" value="1"/>
</dbReference>
<dbReference type="PROSITE" id="PS51918">
    <property type="entry name" value="RADICAL_SAM"/>
    <property type="match status" value="1"/>
</dbReference>